<reference evidence="7" key="1">
    <citation type="journal article" date="2003" name="Genes Cells">
        <title>Tamo selectively modulates nuclear import in Drosophila.</title>
        <authorList>
            <person name="Minakhina S."/>
            <person name="Yang J."/>
            <person name="Steward R."/>
        </authorList>
    </citation>
    <scope>NUCLEOTIDE SEQUENCE [MRNA]</scope>
    <scope>FUNCTION</scope>
    <scope>INTERACTION WITH DL; MSL-1; RAN; RAN-LIKE AND MBO</scope>
    <scope>SUBCELLULAR LOCATION</scope>
    <scope>DEVELOPMENTAL STAGE</scope>
    <source>
        <tissue evidence="5">Embryo</tissue>
        <tissue evidence="5">Ovary</tissue>
    </source>
</reference>
<reference key="2">
    <citation type="journal article" date="2000" name="Science">
        <title>The genome sequence of Drosophila melanogaster.</title>
        <authorList>
            <person name="Adams M.D."/>
            <person name="Celniker S.E."/>
            <person name="Holt R.A."/>
            <person name="Evans C.A."/>
            <person name="Gocayne J.D."/>
            <person name="Amanatides P.G."/>
            <person name="Scherer S.E."/>
            <person name="Li P.W."/>
            <person name="Hoskins R.A."/>
            <person name="Galle R.F."/>
            <person name="George R.A."/>
            <person name="Lewis S.E."/>
            <person name="Richards S."/>
            <person name="Ashburner M."/>
            <person name="Henderson S.N."/>
            <person name="Sutton G.G."/>
            <person name="Wortman J.R."/>
            <person name="Yandell M.D."/>
            <person name="Zhang Q."/>
            <person name="Chen L.X."/>
            <person name="Brandon R.C."/>
            <person name="Rogers Y.-H.C."/>
            <person name="Blazej R.G."/>
            <person name="Champe M."/>
            <person name="Pfeiffer B.D."/>
            <person name="Wan K.H."/>
            <person name="Doyle C."/>
            <person name="Baxter E.G."/>
            <person name="Helt G."/>
            <person name="Nelson C.R."/>
            <person name="Miklos G.L.G."/>
            <person name="Abril J.F."/>
            <person name="Agbayani A."/>
            <person name="An H.-J."/>
            <person name="Andrews-Pfannkoch C."/>
            <person name="Baldwin D."/>
            <person name="Ballew R.M."/>
            <person name="Basu A."/>
            <person name="Baxendale J."/>
            <person name="Bayraktaroglu L."/>
            <person name="Beasley E.M."/>
            <person name="Beeson K.Y."/>
            <person name="Benos P.V."/>
            <person name="Berman B.P."/>
            <person name="Bhandari D."/>
            <person name="Bolshakov S."/>
            <person name="Borkova D."/>
            <person name="Botchan M.R."/>
            <person name="Bouck J."/>
            <person name="Brokstein P."/>
            <person name="Brottier P."/>
            <person name="Burtis K.C."/>
            <person name="Busam D.A."/>
            <person name="Butler H."/>
            <person name="Cadieu E."/>
            <person name="Center A."/>
            <person name="Chandra I."/>
            <person name="Cherry J.M."/>
            <person name="Cawley S."/>
            <person name="Dahlke C."/>
            <person name="Davenport L.B."/>
            <person name="Davies P."/>
            <person name="de Pablos B."/>
            <person name="Delcher A."/>
            <person name="Deng Z."/>
            <person name="Mays A.D."/>
            <person name="Dew I."/>
            <person name="Dietz S.M."/>
            <person name="Dodson K."/>
            <person name="Doup L.E."/>
            <person name="Downes M."/>
            <person name="Dugan-Rocha S."/>
            <person name="Dunkov B.C."/>
            <person name="Dunn P."/>
            <person name="Durbin K.J."/>
            <person name="Evangelista C.C."/>
            <person name="Ferraz C."/>
            <person name="Ferriera S."/>
            <person name="Fleischmann W."/>
            <person name="Fosler C."/>
            <person name="Gabrielian A.E."/>
            <person name="Garg N.S."/>
            <person name="Gelbart W.M."/>
            <person name="Glasser K."/>
            <person name="Glodek A."/>
            <person name="Gong F."/>
            <person name="Gorrell J.H."/>
            <person name="Gu Z."/>
            <person name="Guan P."/>
            <person name="Harris M."/>
            <person name="Harris N.L."/>
            <person name="Harvey D.A."/>
            <person name="Heiman T.J."/>
            <person name="Hernandez J.R."/>
            <person name="Houck J."/>
            <person name="Hostin D."/>
            <person name="Houston K.A."/>
            <person name="Howland T.J."/>
            <person name="Wei M.-H."/>
            <person name="Ibegwam C."/>
            <person name="Jalali M."/>
            <person name="Kalush F."/>
            <person name="Karpen G.H."/>
            <person name="Ke Z."/>
            <person name="Kennison J.A."/>
            <person name="Ketchum K.A."/>
            <person name="Kimmel B.E."/>
            <person name="Kodira C.D."/>
            <person name="Kraft C.L."/>
            <person name="Kravitz S."/>
            <person name="Kulp D."/>
            <person name="Lai Z."/>
            <person name="Lasko P."/>
            <person name="Lei Y."/>
            <person name="Levitsky A.A."/>
            <person name="Li J.H."/>
            <person name="Li Z."/>
            <person name="Liang Y."/>
            <person name="Lin X."/>
            <person name="Liu X."/>
            <person name="Mattei B."/>
            <person name="McIntosh T.C."/>
            <person name="McLeod M.P."/>
            <person name="McPherson D."/>
            <person name="Merkulov G."/>
            <person name="Milshina N.V."/>
            <person name="Mobarry C."/>
            <person name="Morris J."/>
            <person name="Moshrefi A."/>
            <person name="Mount S.M."/>
            <person name="Moy M."/>
            <person name="Murphy B."/>
            <person name="Murphy L."/>
            <person name="Muzny D.M."/>
            <person name="Nelson D.L."/>
            <person name="Nelson D.R."/>
            <person name="Nelson K.A."/>
            <person name="Nixon K."/>
            <person name="Nusskern D.R."/>
            <person name="Pacleb J.M."/>
            <person name="Palazzolo M."/>
            <person name="Pittman G.S."/>
            <person name="Pan S."/>
            <person name="Pollard J."/>
            <person name="Puri V."/>
            <person name="Reese M.G."/>
            <person name="Reinert K."/>
            <person name="Remington K."/>
            <person name="Saunders R.D.C."/>
            <person name="Scheeler F."/>
            <person name="Shen H."/>
            <person name="Shue B.C."/>
            <person name="Siden-Kiamos I."/>
            <person name="Simpson M."/>
            <person name="Skupski M.P."/>
            <person name="Smith T.J."/>
            <person name="Spier E."/>
            <person name="Spradling A.C."/>
            <person name="Stapleton M."/>
            <person name="Strong R."/>
            <person name="Sun E."/>
            <person name="Svirskas R."/>
            <person name="Tector C."/>
            <person name="Turner R."/>
            <person name="Venter E."/>
            <person name="Wang A.H."/>
            <person name="Wang X."/>
            <person name="Wang Z.-Y."/>
            <person name="Wassarman D.A."/>
            <person name="Weinstock G.M."/>
            <person name="Weissenbach J."/>
            <person name="Williams S.M."/>
            <person name="Woodage T."/>
            <person name="Worley K.C."/>
            <person name="Wu D."/>
            <person name="Yang S."/>
            <person name="Yao Q.A."/>
            <person name="Ye J."/>
            <person name="Yeh R.-F."/>
            <person name="Zaveri J.S."/>
            <person name="Zhan M."/>
            <person name="Zhang G."/>
            <person name="Zhao Q."/>
            <person name="Zheng L."/>
            <person name="Zheng X.H."/>
            <person name="Zhong F.N."/>
            <person name="Zhong W."/>
            <person name="Zhou X."/>
            <person name="Zhu S.C."/>
            <person name="Zhu X."/>
            <person name="Smith H.O."/>
            <person name="Gibbs R.A."/>
            <person name="Myers E.W."/>
            <person name="Rubin G.M."/>
            <person name="Venter J.C."/>
        </authorList>
    </citation>
    <scope>NUCLEOTIDE SEQUENCE [LARGE SCALE GENOMIC DNA]</scope>
    <source>
        <strain evidence="3">Berkeley</strain>
    </source>
</reference>
<reference evidence="7" key="3">
    <citation type="journal article" date="2002" name="Genome Biol.">
        <title>Annotation of the Drosophila melanogaster euchromatic genome: a systematic review.</title>
        <authorList>
            <person name="Misra S."/>
            <person name="Crosby M.A."/>
            <person name="Mungall C.J."/>
            <person name="Matthews B.B."/>
            <person name="Campbell K.S."/>
            <person name="Hradecky P."/>
            <person name="Huang Y."/>
            <person name="Kaminker J.S."/>
            <person name="Millburn G.H."/>
            <person name="Prochnik S.E."/>
            <person name="Smith C.D."/>
            <person name="Tupy J.L."/>
            <person name="Whitfield E.J."/>
            <person name="Bayraktaroglu L."/>
            <person name="Berman B.P."/>
            <person name="Bettencourt B.R."/>
            <person name="Celniker S.E."/>
            <person name="de Grey A.D.N.J."/>
            <person name="Drysdale R.A."/>
            <person name="Harris N.L."/>
            <person name="Richter J."/>
            <person name="Russo S."/>
            <person name="Schroeder A.J."/>
            <person name="Shu S.Q."/>
            <person name="Stapleton M."/>
            <person name="Yamada C."/>
            <person name="Ashburner M."/>
            <person name="Gelbart W.M."/>
            <person name="Rubin G.M."/>
            <person name="Lewis S.E."/>
        </authorList>
    </citation>
    <scope>GENOME REANNOTATION</scope>
    <source>
        <strain>Berkeley</strain>
    </source>
</reference>
<reference evidence="7 8" key="4">
    <citation type="journal article" date="2002" name="Genome Biol.">
        <title>A Drosophila full-length cDNA resource.</title>
        <authorList>
            <person name="Stapleton M."/>
            <person name="Carlson J.W."/>
            <person name="Brokstein P."/>
            <person name="Yu C."/>
            <person name="Champe M."/>
            <person name="George R.A."/>
            <person name="Guarin H."/>
            <person name="Kronmiller B."/>
            <person name="Pacleb J.M."/>
            <person name="Park S."/>
            <person name="Wan K.H."/>
            <person name="Rubin G.M."/>
            <person name="Celniker S.E."/>
        </authorList>
    </citation>
    <scope>NUCLEOTIDE SEQUENCE [LARGE SCALE MRNA]</scope>
    <source>
        <strain evidence="8">Berkeley</strain>
        <tissue evidence="4">Embryo</tissue>
    </source>
</reference>
<organism>
    <name type="scientific">Drosophila melanogaster</name>
    <name type="common">Fruit fly</name>
    <dbReference type="NCBI Taxonomy" id="7227"/>
    <lineage>
        <taxon>Eukaryota</taxon>
        <taxon>Metazoa</taxon>
        <taxon>Ecdysozoa</taxon>
        <taxon>Arthropoda</taxon>
        <taxon>Hexapoda</taxon>
        <taxon>Insecta</taxon>
        <taxon>Pterygota</taxon>
        <taxon>Neoptera</taxon>
        <taxon>Endopterygota</taxon>
        <taxon>Diptera</taxon>
        <taxon>Brachycera</taxon>
        <taxon>Muscomorpha</taxon>
        <taxon>Ephydroidea</taxon>
        <taxon>Drosophilidae</taxon>
        <taxon>Drosophila</taxon>
        <taxon>Sophophora</taxon>
    </lineage>
</organism>
<keyword id="KW-0963">Cytoplasm</keyword>
<keyword id="KW-0217">Developmental protein</keyword>
<keyword id="KW-0479">Metal-binding</keyword>
<keyword id="KW-0653">Protein transport</keyword>
<keyword id="KW-1185">Reference proteome</keyword>
<keyword id="KW-0813">Transport</keyword>
<keyword id="KW-0862">Zinc</keyword>
<keyword id="KW-0863">Zinc-finger</keyword>
<protein>
    <recommendedName>
        <fullName>Protein tamozhennic</fullName>
    </recommendedName>
</protein>
<accession>Q9W1A4</accession>
<accession>Q0E8W9</accession>
<accession>Q8SZS5</accession>
<dbReference type="EMBL" id="AE013599">
    <property type="protein sequence ID" value="AAF47169.1"/>
    <property type="molecule type" value="Genomic_DNA"/>
</dbReference>
<dbReference type="EMBL" id="AY070545">
    <property type="protein sequence ID" value="AAL48016.1"/>
    <property type="status" value="ALT_SEQ"/>
    <property type="molecule type" value="mRNA"/>
</dbReference>
<dbReference type="EMBL" id="BT001486">
    <property type="protein sequence ID" value="AAN71241.1"/>
    <property type="molecule type" value="mRNA"/>
</dbReference>
<dbReference type="RefSeq" id="NP_001286827.1">
    <property type="nucleotide sequence ID" value="NM_001299898.1"/>
</dbReference>
<dbReference type="RefSeq" id="NP_611889.1">
    <property type="nucleotide sequence ID" value="NM_138045.2"/>
</dbReference>
<dbReference type="RefSeq" id="NP_726426.1">
    <property type="nucleotide sequence ID" value="NM_166664.1"/>
</dbReference>
<dbReference type="SMR" id="Q9W1A4"/>
<dbReference type="BioGRID" id="63443">
    <property type="interactions" value="31"/>
</dbReference>
<dbReference type="FunCoup" id="Q9W1A4">
    <property type="interactions" value="314"/>
</dbReference>
<dbReference type="IntAct" id="Q9W1A4">
    <property type="interactions" value="13"/>
</dbReference>
<dbReference type="STRING" id="7227.FBpp0072188"/>
<dbReference type="PaxDb" id="7227-FBpp0072188"/>
<dbReference type="DNASU" id="37864"/>
<dbReference type="EnsemblMetazoa" id="FBtr0072281">
    <property type="protein sequence ID" value="FBpp0072188"/>
    <property type="gene ID" value="FBgn0041582"/>
</dbReference>
<dbReference type="EnsemblMetazoa" id="FBtr0072282">
    <property type="protein sequence ID" value="FBpp0072189"/>
    <property type="gene ID" value="FBgn0041582"/>
</dbReference>
<dbReference type="EnsemblMetazoa" id="FBtr0343438">
    <property type="protein sequence ID" value="FBpp0310082"/>
    <property type="gene ID" value="FBgn0041582"/>
</dbReference>
<dbReference type="GeneID" id="37864"/>
<dbReference type="KEGG" id="dme:Dmel_CG4057"/>
<dbReference type="UCSC" id="CG4057-RA">
    <property type="organism name" value="d. melanogaster"/>
</dbReference>
<dbReference type="AGR" id="FB:FBgn0041582"/>
<dbReference type="CTD" id="37864"/>
<dbReference type="FlyBase" id="FBgn0041582">
    <property type="gene designation" value="tamo"/>
</dbReference>
<dbReference type="VEuPathDB" id="VectorBase:FBgn0041582"/>
<dbReference type="eggNOG" id="ENOG502RR2T">
    <property type="taxonomic scope" value="Eukaryota"/>
</dbReference>
<dbReference type="GeneTree" id="ENSGT00530000063956"/>
<dbReference type="HOGENOM" id="CLU_310844_0_0_1"/>
<dbReference type="InParanoid" id="Q9W1A4"/>
<dbReference type="OMA" id="QDMYVYA"/>
<dbReference type="OrthoDB" id="9837000at2759"/>
<dbReference type="PhylomeDB" id="Q9W1A4"/>
<dbReference type="SignaLink" id="Q9W1A4"/>
<dbReference type="BioGRID-ORCS" id="37864">
    <property type="hits" value="0 hits in 3 CRISPR screens"/>
</dbReference>
<dbReference type="GenomeRNAi" id="37864"/>
<dbReference type="PRO" id="PR:Q9W1A4"/>
<dbReference type="Proteomes" id="UP000000803">
    <property type="component" value="Chromosome 2R"/>
</dbReference>
<dbReference type="Bgee" id="FBgn0041582">
    <property type="expression patterns" value="Expressed in adult abdominal pericardial cell (Drosophila) in dorsal vessel heart and 158 other cell types or tissues"/>
</dbReference>
<dbReference type="ExpressionAtlas" id="Q9W1A4">
    <property type="expression patterns" value="baseline and differential"/>
</dbReference>
<dbReference type="GO" id="GO:0005737">
    <property type="term" value="C:cytoplasm"/>
    <property type="evidence" value="ECO:0000314"/>
    <property type="project" value="UniProtKB"/>
</dbReference>
<dbReference type="GO" id="GO:0031267">
    <property type="term" value="F:small GTPase binding"/>
    <property type="evidence" value="ECO:0000353"/>
    <property type="project" value="UniProtKB"/>
</dbReference>
<dbReference type="GO" id="GO:0008270">
    <property type="term" value="F:zinc ion binding"/>
    <property type="evidence" value="ECO:0007669"/>
    <property type="project" value="UniProtKB-KW"/>
</dbReference>
<dbReference type="GO" id="GO:0015031">
    <property type="term" value="P:protein transport"/>
    <property type="evidence" value="ECO:0007669"/>
    <property type="project" value="UniProtKB-KW"/>
</dbReference>
<dbReference type="GO" id="GO:0042306">
    <property type="term" value="P:regulation of protein import into nucleus"/>
    <property type="evidence" value="ECO:0000315"/>
    <property type="project" value="UniProtKB"/>
</dbReference>
<dbReference type="CDD" id="cd09212">
    <property type="entry name" value="PUB"/>
    <property type="match status" value="1"/>
</dbReference>
<dbReference type="FunFam" id="1.20.58.2190:FF:000009">
    <property type="entry name" value="Tamo, isoform B"/>
    <property type="match status" value="1"/>
</dbReference>
<dbReference type="Gene3D" id="1.20.58.2190">
    <property type="match status" value="1"/>
</dbReference>
<dbReference type="Gene3D" id="2.30.30.380">
    <property type="entry name" value="Zn-finger domain of Sec23/24"/>
    <property type="match status" value="1"/>
</dbReference>
<dbReference type="InterPro" id="IPR036339">
    <property type="entry name" value="PUB-like_dom_sf"/>
</dbReference>
<dbReference type="InterPro" id="IPR048839">
    <property type="entry name" value="SPATA2_PUB-like"/>
</dbReference>
<dbReference type="InterPro" id="IPR001876">
    <property type="entry name" value="Znf_RanBP2"/>
</dbReference>
<dbReference type="InterPro" id="IPR036443">
    <property type="entry name" value="Znf_RanBP2_sf"/>
</dbReference>
<dbReference type="PANTHER" id="PTHR15326:SF2">
    <property type="entry name" value="PROTEIN TAMOZHENNIC"/>
    <property type="match status" value="1"/>
</dbReference>
<dbReference type="PANTHER" id="PTHR15326">
    <property type="entry name" value="SPERMATOGENESIS-ASSOCIATED PROTEIN 2/TAMOZHENNIC"/>
    <property type="match status" value="1"/>
</dbReference>
<dbReference type="Pfam" id="PF21388">
    <property type="entry name" value="SPATA2_PUB-like"/>
    <property type="match status" value="1"/>
</dbReference>
<dbReference type="SMART" id="SM00547">
    <property type="entry name" value="ZnF_RBZ"/>
    <property type="match status" value="1"/>
</dbReference>
<dbReference type="SUPFAM" id="SSF143503">
    <property type="entry name" value="PUG domain-like"/>
    <property type="match status" value="1"/>
</dbReference>
<dbReference type="SUPFAM" id="SSF90209">
    <property type="entry name" value="Ran binding protein zinc finger-like"/>
    <property type="match status" value="1"/>
</dbReference>
<dbReference type="PROSITE" id="PS01358">
    <property type="entry name" value="ZF_RANBP2_1"/>
    <property type="match status" value="1"/>
</dbReference>
<gene>
    <name type="primary">tamo</name>
    <name type="ORF">CG4057</name>
</gene>
<proteinExistence type="evidence at protein level"/>
<feature type="chain" id="PRO_0000072425" description="Protein tamozhennic">
    <location>
        <begin position="1"/>
        <end position="797"/>
    </location>
</feature>
<feature type="domain" description="PUB" evidence="1">
    <location>
        <begin position="79"/>
        <end position="146"/>
    </location>
</feature>
<feature type="zinc finger region" description="RanBP2-type" evidence="1">
    <location>
        <begin position="735"/>
        <end position="766"/>
    </location>
</feature>
<feature type="region of interest" description="Disordered" evidence="2">
    <location>
        <begin position="515"/>
        <end position="570"/>
    </location>
</feature>
<feature type="region of interest" description="Disordered" evidence="2">
    <location>
        <begin position="638"/>
        <end position="697"/>
    </location>
</feature>
<feature type="compositionally biased region" description="Basic and acidic residues" evidence="2">
    <location>
        <begin position="662"/>
        <end position="679"/>
    </location>
</feature>
<name>TAMO_DROME</name>
<comment type="function">
    <text evidence="5">Has an essential role during oogenesis and embryogenesis, perhaps in modulating the levels of nuclear import of additional proteins. Modulates the nuclear import of dorsal (dl), Dif and male specific lethal 1 (msl-1). Negatively regulates nuclear import of dl and controls the accumulation of dl in the nucleus after immune challenge.</text>
</comment>
<comment type="subunit">
    <text evidence="5">Homomultimer. Binds to dl and msl-1 via their nuclear localization signal (NLS). Also binds to Ran, Ran-like and mbo.</text>
</comment>
<comment type="interaction">
    <interactant intactId="EBI-91385">
        <id>Q9W1A4</id>
    </interactant>
    <interactant intactId="EBI-198375">
        <id>P15330</id>
        <label>dl</label>
    </interactant>
    <organismsDiffer>false</organismsDiffer>
    <experiments>4</experiments>
</comment>
<comment type="subcellular location">
    <subcellularLocation>
        <location evidence="5">Cytoplasm</location>
    </subcellularLocation>
</comment>
<comment type="developmental stage">
    <text evidence="5">Expressed both maternally and zygotically, zygotic expression is seen throughout development.</text>
</comment>
<comment type="miscellaneous">
    <text evidence="6">'Tamozhennic' means 'customs officer' in Russian.</text>
</comment>
<comment type="sequence caution" evidence="7">
    <conflict type="miscellaneous discrepancy">
        <sequence resource="EMBL-CDS" id="AAL48016"/>
    </conflict>
    <text>Contaminating sequence. Sequence of unknown origin in the N-terminal part.</text>
</comment>
<sequence length="797" mass="87914">MSDFVPHDLIPDLWDEILRRHWMFLETEESIEKLEERKQLEGCLKEFLCVVQHDRKFFLPETGHVLRRSVLELPDFSAQNAIVAFETISQYANNLFTKPWRKEYRTLKTYSGCFQHDIQSRLLDAEQLFLAMGYRRAAEDTFVLEGPICPDQVTNVSRDAMAAYVECQIMKHIYAGVTAAGYVCTWKDILQFRERYVGGTSTTIKEMVRQLSEKRVRMEQPPMQENTYSNVVSAAPTACGMRSNNVAHHPSSSGTCALHPNGLNEAGKYLPPYPAPPPQQPHLPGPLMTHSRSLDHYQEPQAHLPHRHSFDQQLQQQCQLPHVYEAPYDCLDGLSMGSSASYAAVTGAYNAPGNRYPLPYNISSQLNAPYASPADFYGNGQHTNMYATLGKTGPAHSCDLHRRQPNTSAAAAAALAAMQHRQSTYPPDHHLIDFDERAHLTQHDFGTHDYDPQYAELRGQVQPSMRGNPVAMYATYGGYDLPTTLPQAPPPTGQDMYIYARPVPKSSRMRALAEAGGINSTDKHPRSAEKQSTMDNNRKMHKELKERNSRTAPAKRSGTERDIPTTISDLNSYDSASLDGFVALDSSSSPPLMPKVQEGVGSFESWNYVFKNLERSGYTKDLGDREDLLVQSLDLGSLSITNGGAAPPAEKRREATNPTNGEKARTLDKKSGTGRREAKVVQAPAPSPLPNSSSAGVKKVKSALKTAVVDNRGTGSRQRTGAVPKQPPNVSPQLIVTSPNEWSCSFCTFLNPDTKRICEMCCRSKDFNLEAASAASSSAAAAAASAASVSHASSTCV</sequence>
<evidence type="ECO:0000255" key="1"/>
<evidence type="ECO:0000256" key="2">
    <source>
        <dbReference type="SAM" id="MobiDB-lite"/>
    </source>
</evidence>
<evidence type="ECO:0000269" key="3">
    <source>
    </source>
</evidence>
<evidence type="ECO:0000269" key="4">
    <source>
    </source>
</evidence>
<evidence type="ECO:0000269" key="5">
    <source>
    </source>
</evidence>
<evidence type="ECO:0000303" key="6">
    <source>
    </source>
</evidence>
<evidence type="ECO:0000305" key="7"/>
<evidence type="ECO:0000312" key="8">
    <source>
        <dbReference type="EMBL" id="AAN71241.1"/>
    </source>
</evidence>